<organism>
    <name type="scientific">Cereibacter sphaeroides (strain ATCC 17029 / ATH 2.4.9)</name>
    <name type="common">Rhodobacter sphaeroides</name>
    <dbReference type="NCBI Taxonomy" id="349101"/>
    <lineage>
        <taxon>Bacteria</taxon>
        <taxon>Pseudomonadati</taxon>
        <taxon>Pseudomonadota</taxon>
        <taxon>Alphaproteobacteria</taxon>
        <taxon>Rhodobacterales</taxon>
        <taxon>Paracoccaceae</taxon>
        <taxon>Cereibacter</taxon>
    </lineage>
</organism>
<comment type="function">
    <text evidence="1">O-methyltransferase that catalyzes the 2 O-methylation steps in the ubiquinone biosynthetic pathway.</text>
</comment>
<comment type="catalytic activity">
    <reaction evidence="1">
        <text>a 3-demethylubiquinol + S-adenosyl-L-methionine = a ubiquinol + S-adenosyl-L-homocysteine + H(+)</text>
        <dbReference type="Rhea" id="RHEA:44380"/>
        <dbReference type="Rhea" id="RHEA-COMP:9566"/>
        <dbReference type="Rhea" id="RHEA-COMP:10914"/>
        <dbReference type="ChEBI" id="CHEBI:15378"/>
        <dbReference type="ChEBI" id="CHEBI:17976"/>
        <dbReference type="ChEBI" id="CHEBI:57856"/>
        <dbReference type="ChEBI" id="CHEBI:59789"/>
        <dbReference type="ChEBI" id="CHEBI:84422"/>
        <dbReference type="EC" id="2.1.1.64"/>
    </reaction>
</comment>
<comment type="catalytic activity">
    <reaction evidence="1">
        <text>a 3-(all-trans-polyprenyl)benzene-1,2-diol + S-adenosyl-L-methionine = a 2-methoxy-6-(all-trans-polyprenyl)phenol + S-adenosyl-L-homocysteine + H(+)</text>
        <dbReference type="Rhea" id="RHEA:31411"/>
        <dbReference type="Rhea" id="RHEA-COMP:9550"/>
        <dbReference type="Rhea" id="RHEA-COMP:9551"/>
        <dbReference type="ChEBI" id="CHEBI:15378"/>
        <dbReference type="ChEBI" id="CHEBI:57856"/>
        <dbReference type="ChEBI" id="CHEBI:59789"/>
        <dbReference type="ChEBI" id="CHEBI:62729"/>
        <dbReference type="ChEBI" id="CHEBI:62731"/>
        <dbReference type="EC" id="2.1.1.222"/>
    </reaction>
</comment>
<comment type="pathway">
    <text evidence="1">Cofactor biosynthesis; ubiquinone biosynthesis.</text>
</comment>
<comment type="similarity">
    <text evidence="1">Belongs to the methyltransferase superfamily. UbiG/COQ3 family.</text>
</comment>
<keyword id="KW-0489">Methyltransferase</keyword>
<keyword id="KW-0949">S-adenosyl-L-methionine</keyword>
<keyword id="KW-0808">Transferase</keyword>
<keyword id="KW-0831">Ubiquinone biosynthesis</keyword>
<sequence length="247" mass="27299">MESSSTIDPAEVAKFEAMAAEWWNPHGKFKPLHQMNPCRLDYITQQIAAEFDRDLSAPLPFEGLRLLDIGCGGGLLSEPMARLGAEVIGADAAPRNIPVAKLHAEQSGLTIDYRNTTAEALAAAGERFDVVLNMEVVEHVADPLAYLTACRELLKPGGLMICSTLNRNPKSFAMAIVGAEWVMRWLPKGTHDWSKFITPDELYDLIRKAGLDPVDRKGMVFNPVSWSWSLSTRDLSVNYVTASVRRT</sequence>
<gene>
    <name evidence="1" type="primary">ubiG</name>
    <name type="ordered locus">Rsph17029_2837</name>
</gene>
<reference key="1">
    <citation type="submission" date="2007-02" db="EMBL/GenBank/DDBJ databases">
        <title>Complete sequence of chromosome 1 of Rhodobacter sphaeroides ATCC 17029.</title>
        <authorList>
            <person name="Copeland A."/>
            <person name="Lucas S."/>
            <person name="Lapidus A."/>
            <person name="Barry K."/>
            <person name="Detter J.C."/>
            <person name="Glavina del Rio T."/>
            <person name="Hammon N."/>
            <person name="Israni S."/>
            <person name="Dalin E."/>
            <person name="Tice H."/>
            <person name="Pitluck S."/>
            <person name="Kiss H."/>
            <person name="Brettin T."/>
            <person name="Bruce D."/>
            <person name="Han C."/>
            <person name="Tapia R."/>
            <person name="Gilna P."/>
            <person name="Schmutz J."/>
            <person name="Larimer F."/>
            <person name="Land M."/>
            <person name="Hauser L."/>
            <person name="Kyrpides N."/>
            <person name="Mikhailova N."/>
            <person name="Richardson P."/>
            <person name="Mackenzie C."/>
            <person name="Choudhary M."/>
            <person name="Donohue T.J."/>
            <person name="Kaplan S."/>
        </authorList>
    </citation>
    <scope>NUCLEOTIDE SEQUENCE [LARGE SCALE GENOMIC DNA]</scope>
    <source>
        <strain>ATCC 17029 / ATH 2.4.9</strain>
    </source>
</reference>
<evidence type="ECO:0000255" key="1">
    <source>
        <dbReference type="HAMAP-Rule" id="MF_00472"/>
    </source>
</evidence>
<proteinExistence type="inferred from homology"/>
<feature type="chain" id="PRO_1000013914" description="Ubiquinone biosynthesis O-methyltransferase">
    <location>
        <begin position="1"/>
        <end position="247"/>
    </location>
</feature>
<feature type="binding site" evidence="1">
    <location>
        <position position="39"/>
    </location>
    <ligand>
        <name>S-adenosyl-L-methionine</name>
        <dbReference type="ChEBI" id="CHEBI:59789"/>
    </ligand>
</feature>
<feature type="binding site" evidence="1">
    <location>
        <position position="70"/>
    </location>
    <ligand>
        <name>S-adenosyl-L-methionine</name>
        <dbReference type="ChEBI" id="CHEBI:59789"/>
    </ligand>
</feature>
<feature type="binding site" evidence="1">
    <location>
        <position position="91"/>
    </location>
    <ligand>
        <name>S-adenosyl-L-methionine</name>
        <dbReference type="ChEBI" id="CHEBI:59789"/>
    </ligand>
</feature>
<feature type="binding site" evidence="1">
    <location>
        <position position="134"/>
    </location>
    <ligand>
        <name>S-adenosyl-L-methionine</name>
        <dbReference type="ChEBI" id="CHEBI:59789"/>
    </ligand>
</feature>
<protein>
    <recommendedName>
        <fullName evidence="1">Ubiquinone biosynthesis O-methyltransferase</fullName>
    </recommendedName>
    <alternativeName>
        <fullName evidence="1">2-polyprenyl-6-hydroxyphenol methylase</fullName>
        <ecNumber evidence="1">2.1.1.222</ecNumber>
    </alternativeName>
    <alternativeName>
        <fullName evidence="1">3-demethylubiquinone 3-O-methyltransferase</fullName>
        <ecNumber evidence="1">2.1.1.64</ecNumber>
    </alternativeName>
</protein>
<dbReference type="EC" id="2.1.1.222" evidence="1"/>
<dbReference type="EC" id="2.1.1.64" evidence="1"/>
<dbReference type="EMBL" id="CP000577">
    <property type="protein sequence ID" value="ABN77939.1"/>
    <property type="molecule type" value="Genomic_DNA"/>
</dbReference>
<dbReference type="RefSeq" id="WP_011841912.1">
    <property type="nucleotide sequence ID" value="NC_009049.1"/>
</dbReference>
<dbReference type="SMR" id="A3PNM3"/>
<dbReference type="KEGG" id="rsh:Rsph17029_2837"/>
<dbReference type="HOGENOM" id="CLU_042432_0_0_5"/>
<dbReference type="UniPathway" id="UPA00232"/>
<dbReference type="GO" id="GO:0102208">
    <property type="term" value="F:2-polyprenyl-6-hydroxyphenol methylase activity"/>
    <property type="evidence" value="ECO:0007669"/>
    <property type="project" value="UniProtKB-EC"/>
</dbReference>
<dbReference type="GO" id="GO:0061542">
    <property type="term" value="F:3-demethylubiquinol 3-O-methyltransferase activity"/>
    <property type="evidence" value="ECO:0007669"/>
    <property type="project" value="UniProtKB-UniRule"/>
</dbReference>
<dbReference type="GO" id="GO:0010420">
    <property type="term" value="F:polyprenyldihydroxybenzoate methyltransferase activity"/>
    <property type="evidence" value="ECO:0007669"/>
    <property type="project" value="InterPro"/>
</dbReference>
<dbReference type="GO" id="GO:0032259">
    <property type="term" value="P:methylation"/>
    <property type="evidence" value="ECO:0007669"/>
    <property type="project" value="UniProtKB-KW"/>
</dbReference>
<dbReference type="CDD" id="cd02440">
    <property type="entry name" value="AdoMet_MTases"/>
    <property type="match status" value="1"/>
</dbReference>
<dbReference type="Gene3D" id="3.40.50.150">
    <property type="entry name" value="Vaccinia Virus protein VP39"/>
    <property type="match status" value="1"/>
</dbReference>
<dbReference type="HAMAP" id="MF_00472">
    <property type="entry name" value="UbiG"/>
    <property type="match status" value="1"/>
</dbReference>
<dbReference type="InterPro" id="IPR029063">
    <property type="entry name" value="SAM-dependent_MTases_sf"/>
</dbReference>
<dbReference type="InterPro" id="IPR010233">
    <property type="entry name" value="UbiG_MeTrfase"/>
</dbReference>
<dbReference type="NCBIfam" id="TIGR01983">
    <property type="entry name" value="UbiG"/>
    <property type="match status" value="1"/>
</dbReference>
<dbReference type="PANTHER" id="PTHR43464">
    <property type="entry name" value="METHYLTRANSFERASE"/>
    <property type="match status" value="1"/>
</dbReference>
<dbReference type="PANTHER" id="PTHR43464:SF19">
    <property type="entry name" value="UBIQUINONE BIOSYNTHESIS O-METHYLTRANSFERASE, MITOCHONDRIAL"/>
    <property type="match status" value="1"/>
</dbReference>
<dbReference type="Pfam" id="PF13489">
    <property type="entry name" value="Methyltransf_23"/>
    <property type="match status" value="1"/>
</dbReference>
<dbReference type="SUPFAM" id="SSF53335">
    <property type="entry name" value="S-adenosyl-L-methionine-dependent methyltransferases"/>
    <property type="match status" value="1"/>
</dbReference>
<accession>A3PNM3</accession>
<name>UBIG_CERS1</name>